<organism>
    <name type="scientific">Eulemur coronatus</name>
    <name type="common">Crowned lemur</name>
    <dbReference type="NCBI Taxonomy" id="13514"/>
    <lineage>
        <taxon>Eukaryota</taxon>
        <taxon>Metazoa</taxon>
        <taxon>Chordata</taxon>
        <taxon>Craniata</taxon>
        <taxon>Vertebrata</taxon>
        <taxon>Euteleostomi</taxon>
        <taxon>Mammalia</taxon>
        <taxon>Eutheria</taxon>
        <taxon>Euarchontoglires</taxon>
        <taxon>Primates</taxon>
        <taxon>Strepsirrhini</taxon>
        <taxon>Lemuriformes</taxon>
        <taxon>Lemuridae</taxon>
        <taxon>Eulemur</taxon>
    </lineage>
</organism>
<accession>Q5VJ65</accession>
<comment type="function">
    <text evidence="2">Component of the ubiquinol-cytochrome c reductase complex (complex III or cytochrome b-c1 complex) that is part of the mitochondrial respiratory chain. The b-c1 complex mediates electron transfer from ubiquinol to cytochrome c. Contributes to the generation of a proton gradient across the mitochondrial membrane that is then used for ATP synthesis.</text>
</comment>
<comment type="cofactor">
    <cofactor evidence="2">
        <name>heme b</name>
        <dbReference type="ChEBI" id="CHEBI:60344"/>
    </cofactor>
    <text evidence="2">Binds 2 heme b groups non-covalently.</text>
</comment>
<comment type="subunit">
    <text evidence="2">The cytochrome bc1 complex contains 11 subunits: 3 respiratory subunits (MT-CYB, CYC1 and UQCRFS1), 2 core proteins (UQCRC1 and UQCRC2) and 6 low-molecular weight proteins (UQCRH/QCR6, UQCRB/QCR7, UQCRQ/QCR8, UQCR10/QCR9, UQCR11/QCR10 and a cleavage product of UQCRFS1). This cytochrome bc1 complex then forms a dimer.</text>
</comment>
<comment type="subcellular location">
    <subcellularLocation>
        <location evidence="2">Mitochondrion inner membrane</location>
        <topology evidence="2">Multi-pass membrane protein</topology>
    </subcellularLocation>
</comment>
<comment type="miscellaneous">
    <text evidence="1">Heme 1 (or BL or b562) is low-potential and absorbs at about 562 nm, and heme 2 (or BH or b566) is high-potential and absorbs at about 566 nm.</text>
</comment>
<comment type="similarity">
    <text evidence="3 4">Belongs to the cytochrome b family.</text>
</comment>
<comment type="caution">
    <text evidence="2">The full-length protein contains only eight transmembrane helices, not nine as predicted by bioinformatics tools.</text>
</comment>
<name>CYB_EULCO</name>
<dbReference type="EMBL" id="AY441448">
    <property type="protein sequence ID" value="AAS00129.1"/>
    <property type="molecule type" value="Genomic_DNA"/>
</dbReference>
<dbReference type="SMR" id="Q5VJ65"/>
<dbReference type="GO" id="GO:0005743">
    <property type="term" value="C:mitochondrial inner membrane"/>
    <property type="evidence" value="ECO:0007669"/>
    <property type="project" value="UniProtKB-SubCell"/>
</dbReference>
<dbReference type="GO" id="GO:0045275">
    <property type="term" value="C:respiratory chain complex III"/>
    <property type="evidence" value="ECO:0007669"/>
    <property type="project" value="InterPro"/>
</dbReference>
<dbReference type="GO" id="GO:0046872">
    <property type="term" value="F:metal ion binding"/>
    <property type="evidence" value="ECO:0007669"/>
    <property type="project" value="UniProtKB-KW"/>
</dbReference>
<dbReference type="GO" id="GO:0008121">
    <property type="term" value="F:ubiquinol-cytochrome-c reductase activity"/>
    <property type="evidence" value="ECO:0007669"/>
    <property type="project" value="InterPro"/>
</dbReference>
<dbReference type="GO" id="GO:0006122">
    <property type="term" value="P:mitochondrial electron transport, ubiquinol to cytochrome c"/>
    <property type="evidence" value="ECO:0007669"/>
    <property type="project" value="TreeGrafter"/>
</dbReference>
<dbReference type="CDD" id="cd00290">
    <property type="entry name" value="cytochrome_b_C"/>
    <property type="match status" value="1"/>
</dbReference>
<dbReference type="CDD" id="cd00284">
    <property type="entry name" value="Cytochrome_b_N"/>
    <property type="match status" value="1"/>
</dbReference>
<dbReference type="FunFam" id="1.20.810.10:FF:000002">
    <property type="entry name" value="Cytochrome b"/>
    <property type="match status" value="1"/>
</dbReference>
<dbReference type="Gene3D" id="1.20.810.10">
    <property type="entry name" value="Cytochrome Bc1 Complex, Chain C"/>
    <property type="match status" value="1"/>
</dbReference>
<dbReference type="InterPro" id="IPR005798">
    <property type="entry name" value="Cyt_b/b6_C"/>
</dbReference>
<dbReference type="InterPro" id="IPR036150">
    <property type="entry name" value="Cyt_b/b6_C_sf"/>
</dbReference>
<dbReference type="InterPro" id="IPR005797">
    <property type="entry name" value="Cyt_b/b6_N"/>
</dbReference>
<dbReference type="InterPro" id="IPR027387">
    <property type="entry name" value="Cytb/b6-like_sf"/>
</dbReference>
<dbReference type="InterPro" id="IPR030689">
    <property type="entry name" value="Cytochrome_b"/>
</dbReference>
<dbReference type="InterPro" id="IPR048260">
    <property type="entry name" value="Cytochrome_b_C_euk/bac"/>
</dbReference>
<dbReference type="InterPro" id="IPR048259">
    <property type="entry name" value="Cytochrome_b_N_euk/bac"/>
</dbReference>
<dbReference type="InterPro" id="IPR016174">
    <property type="entry name" value="Di-haem_cyt_TM"/>
</dbReference>
<dbReference type="PANTHER" id="PTHR19271">
    <property type="entry name" value="CYTOCHROME B"/>
    <property type="match status" value="1"/>
</dbReference>
<dbReference type="PANTHER" id="PTHR19271:SF16">
    <property type="entry name" value="CYTOCHROME B"/>
    <property type="match status" value="1"/>
</dbReference>
<dbReference type="Pfam" id="PF00032">
    <property type="entry name" value="Cytochrom_B_C"/>
    <property type="match status" value="1"/>
</dbReference>
<dbReference type="Pfam" id="PF00033">
    <property type="entry name" value="Cytochrome_B"/>
    <property type="match status" value="1"/>
</dbReference>
<dbReference type="PIRSF" id="PIRSF038885">
    <property type="entry name" value="COB"/>
    <property type="match status" value="1"/>
</dbReference>
<dbReference type="SUPFAM" id="SSF81648">
    <property type="entry name" value="a domain/subunit of cytochrome bc1 complex (Ubiquinol-cytochrome c reductase)"/>
    <property type="match status" value="1"/>
</dbReference>
<dbReference type="SUPFAM" id="SSF81342">
    <property type="entry name" value="Transmembrane di-heme cytochromes"/>
    <property type="match status" value="1"/>
</dbReference>
<dbReference type="PROSITE" id="PS51003">
    <property type="entry name" value="CYTB_CTER"/>
    <property type="match status" value="1"/>
</dbReference>
<dbReference type="PROSITE" id="PS51002">
    <property type="entry name" value="CYTB_NTER"/>
    <property type="match status" value="1"/>
</dbReference>
<evidence type="ECO:0000250" key="1"/>
<evidence type="ECO:0000250" key="2">
    <source>
        <dbReference type="UniProtKB" id="P00157"/>
    </source>
</evidence>
<evidence type="ECO:0000255" key="3">
    <source>
        <dbReference type="PROSITE-ProRule" id="PRU00967"/>
    </source>
</evidence>
<evidence type="ECO:0000255" key="4">
    <source>
        <dbReference type="PROSITE-ProRule" id="PRU00968"/>
    </source>
</evidence>
<proteinExistence type="inferred from homology"/>
<gene>
    <name type="primary">MT-CYB</name>
    <name type="synonym">COB</name>
    <name type="synonym">CYTB</name>
    <name type="synonym">MTCYB</name>
</gene>
<geneLocation type="mitochondrion"/>
<keyword id="KW-0249">Electron transport</keyword>
<keyword id="KW-0349">Heme</keyword>
<keyword id="KW-0408">Iron</keyword>
<keyword id="KW-0472">Membrane</keyword>
<keyword id="KW-0479">Metal-binding</keyword>
<keyword id="KW-0496">Mitochondrion</keyword>
<keyword id="KW-0999">Mitochondrion inner membrane</keyword>
<keyword id="KW-0679">Respiratory chain</keyword>
<keyword id="KW-0812">Transmembrane</keyword>
<keyword id="KW-1133">Transmembrane helix</keyword>
<keyword id="KW-0813">Transport</keyword>
<keyword id="KW-0830">Ubiquinone</keyword>
<sequence>MNNIRKNHPLMKIMNNSFIDLPAPSNISSWWNFGSLLGACLALQIITGLFLAMHYTADTTTAFSSVAHICRDVNYGWIIRYLHANGASMFFLCLFIHIGRGLYYGSFTLTETWNIGIILLFTVMATAFMGYVLPWGQMSFWGATVITNLLSAIPYIGTNLVEWIWGGFSVDKATLTRFFAFHFILPFIIAALVLVHLLFLHETGSNNPLGISSDSDKIPFHPYYTIKDLLGLLLLILLTLILVLFSPDLLGDPDNYTPANPLNTPPHIKPEWYFLFAYAILRSIPNKLGGVLALIFSILILAIIPILHTAKQRSMLFRPLSQCLFWTLTADLLILTWIGGQPVEHPFITIGQVASILYFTLILILMPMVSLIENKMLKW</sequence>
<reference key="1">
    <citation type="submission" date="2003-10" db="EMBL/GenBank/DDBJ databases">
        <title>61 primate SINEs and the evolution of strepsirrhines.</title>
        <authorList>
            <person name="Roos C."/>
            <person name="Schmitz J."/>
            <person name="Zischler H."/>
        </authorList>
    </citation>
    <scope>NUCLEOTIDE SEQUENCE [GENOMIC DNA]</scope>
</reference>
<protein>
    <recommendedName>
        <fullName>Cytochrome b</fullName>
    </recommendedName>
    <alternativeName>
        <fullName>Complex III subunit 3</fullName>
    </alternativeName>
    <alternativeName>
        <fullName>Complex III subunit III</fullName>
    </alternativeName>
    <alternativeName>
        <fullName>Cytochrome b-c1 complex subunit 3</fullName>
    </alternativeName>
    <alternativeName>
        <fullName>Ubiquinol-cytochrome-c reductase complex cytochrome b subunit</fullName>
    </alternativeName>
</protein>
<feature type="chain" id="PRO_0000060953" description="Cytochrome b">
    <location>
        <begin position="1"/>
        <end position="379"/>
    </location>
</feature>
<feature type="transmembrane region" description="Helical" evidence="2">
    <location>
        <begin position="33"/>
        <end position="53"/>
    </location>
</feature>
<feature type="transmembrane region" description="Helical" evidence="2">
    <location>
        <begin position="77"/>
        <end position="98"/>
    </location>
</feature>
<feature type="transmembrane region" description="Helical" evidence="2">
    <location>
        <begin position="113"/>
        <end position="133"/>
    </location>
</feature>
<feature type="transmembrane region" description="Helical" evidence="2">
    <location>
        <begin position="178"/>
        <end position="198"/>
    </location>
</feature>
<feature type="transmembrane region" description="Helical" evidence="2">
    <location>
        <begin position="226"/>
        <end position="246"/>
    </location>
</feature>
<feature type="transmembrane region" description="Helical" evidence="2">
    <location>
        <begin position="288"/>
        <end position="308"/>
    </location>
</feature>
<feature type="transmembrane region" description="Helical" evidence="2">
    <location>
        <begin position="320"/>
        <end position="340"/>
    </location>
</feature>
<feature type="transmembrane region" description="Helical" evidence="2">
    <location>
        <begin position="347"/>
        <end position="367"/>
    </location>
</feature>
<feature type="binding site" description="axial binding residue" evidence="2">
    <location>
        <position position="83"/>
    </location>
    <ligand>
        <name>heme b</name>
        <dbReference type="ChEBI" id="CHEBI:60344"/>
        <label>b562</label>
    </ligand>
    <ligandPart>
        <name>Fe</name>
        <dbReference type="ChEBI" id="CHEBI:18248"/>
    </ligandPart>
</feature>
<feature type="binding site" description="axial binding residue" evidence="2">
    <location>
        <position position="97"/>
    </location>
    <ligand>
        <name>heme b</name>
        <dbReference type="ChEBI" id="CHEBI:60344"/>
        <label>b566</label>
    </ligand>
    <ligandPart>
        <name>Fe</name>
        <dbReference type="ChEBI" id="CHEBI:18248"/>
    </ligandPart>
</feature>
<feature type="binding site" description="axial binding residue" evidence="2">
    <location>
        <position position="182"/>
    </location>
    <ligand>
        <name>heme b</name>
        <dbReference type="ChEBI" id="CHEBI:60344"/>
        <label>b562</label>
    </ligand>
    <ligandPart>
        <name>Fe</name>
        <dbReference type="ChEBI" id="CHEBI:18248"/>
    </ligandPart>
</feature>
<feature type="binding site" description="axial binding residue" evidence="2">
    <location>
        <position position="196"/>
    </location>
    <ligand>
        <name>heme b</name>
        <dbReference type="ChEBI" id="CHEBI:60344"/>
        <label>b566</label>
    </ligand>
    <ligandPart>
        <name>Fe</name>
        <dbReference type="ChEBI" id="CHEBI:18248"/>
    </ligandPart>
</feature>
<feature type="binding site" evidence="2">
    <location>
        <position position="201"/>
    </location>
    <ligand>
        <name>a ubiquinone</name>
        <dbReference type="ChEBI" id="CHEBI:16389"/>
    </ligand>
</feature>